<sequence>MEKRKIILDCDPGHDDAIAIMMAAKHPAIDLLGITIVAGNQTLDKTLINGLNVCQKLEINVPVYAGMPQPIMRQQIVADNIHGETGLDGPVFEPLTRQAESTHAVKYIIDTLMASDGDITLVPVGPLSNIAVAMRMQPAILPKIREIVLMGGAYGTGNFTPSAEFNIFADPEAARVVFTSGVPLVMMGLDLTNQTVCTPDVIARMERAGGPAGELFSDIMNFTLKTQFENYGLAGGPVHDATCIGYLINPDGIKTQEMYVEVDVNSGPCYGRTVCDELGVLGKPANTKVGITIDTDWFWGLVEECVRGYIKTH</sequence>
<comment type="function">
    <text evidence="1">Hydrolyzes cytidine or uridine to ribose and cytosine or uracil, respectively. Has a clear preference for cytidine over uridine. Strictly specific for ribonucleosides.</text>
</comment>
<comment type="catalytic activity">
    <reaction evidence="1">
        <text>a pyrimidine ribonucleoside + H2O = a pyrimidine nucleobase + D-ribose</text>
        <dbReference type="Rhea" id="RHEA:56816"/>
        <dbReference type="ChEBI" id="CHEBI:15377"/>
        <dbReference type="ChEBI" id="CHEBI:26432"/>
        <dbReference type="ChEBI" id="CHEBI:47013"/>
        <dbReference type="ChEBI" id="CHEBI:141014"/>
        <dbReference type="EC" id="3.2.2.8"/>
    </reaction>
</comment>
<comment type="cofactor">
    <cofactor evidence="1">
        <name>Ca(2+)</name>
        <dbReference type="ChEBI" id="CHEBI:29108"/>
    </cofactor>
    <text evidence="1">Binds 1 Ca(2+) ion per monomer.</text>
</comment>
<comment type="subunit">
    <text evidence="1">Homotetramer.</text>
</comment>
<comment type="similarity">
    <text evidence="1">Belongs to the IUNH family. RihB subfamily.</text>
</comment>
<reference key="1">
    <citation type="journal article" date="2008" name="J. Bacteriol.">
        <title>The pangenome structure of Escherichia coli: comparative genomic analysis of E. coli commensal and pathogenic isolates.</title>
        <authorList>
            <person name="Rasko D.A."/>
            <person name="Rosovitz M.J."/>
            <person name="Myers G.S.A."/>
            <person name="Mongodin E.F."/>
            <person name="Fricke W.F."/>
            <person name="Gajer P."/>
            <person name="Crabtree J."/>
            <person name="Sebaihia M."/>
            <person name="Thomson N.R."/>
            <person name="Chaudhuri R."/>
            <person name="Henderson I.R."/>
            <person name="Sperandio V."/>
            <person name="Ravel J."/>
        </authorList>
    </citation>
    <scope>NUCLEOTIDE SEQUENCE [LARGE SCALE GENOMIC DNA]</scope>
    <source>
        <strain>E24377A / ETEC</strain>
    </source>
</reference>
<organism>
    <name type="scientific">Escherichia coli O139:H28 (strain E24377A / ETEC)</name>
    <dbReference type="NCBI Taxonomy" id="331111"/>
    <lineage>
        <taxon>Bacteria</taxon>
        <taxon>Pseudomonadati</taxon>
        <taxon>Pseudomonadota</taxon>
        <taxon>Gammaproteobacteria</taxon>
        <taxon>Enterobacterales</taxon>
        <taxon>Enterobacteriaceae</taxon>
        <taxon>Escherichia</taxon>
    </lineage>
</organism>
<proteinExistence type="inferred from homology"/>
<protein>
    <recommendedName>
        <fullName evidence="1">Pyrimidine-specific ribonucleoside hydrolase RihB</fullName>
        <ecNumber evidence="1">3.2.2.8</ecNumber>
    </recommendedName>
    <alternativeName>
        <fullName evidence="1">Cytidine/uridine-specific hydrolase</fullName>
    </alternativeName>
</protein>
<keyword id="KW-0106">Calcium</keyword>
<keyword id="KW-0326">Glycosidase</keyword>
<keyword id="KW-0378">Hydrolase</keyword>
<keyword id="KW-0479">Metal-binding</keyword>
<keyword id="KW-1185">Reference proteome</keyword>
<feature type="chain" id="PRO_1000068531" description="Pyrimidine-specific ribonucleoside hydrolase RihB">
    <location>
        <begin position="1"/>
        <end position="313"/>
    </location>
</feature>
<feature type="active site" description="Proton acceptor" evidence="1">
    <location>
        <position position="11"/>
    </location>
</feature>
<feature type="binding site" evidence="1">
    <location>
        <position position="11"/>
    </location>
    <ligand>
        <name>Ca(2+)</name>
        <dbReference type="ChEBI" id="CHEBI:29108"/>
    </ligand>
</feature>
<feature type="binding site" evidence="1">
    <location>
        <position position="16"/>
    </location>
    <ligand>
        <name>Ca(2+)</name>
        <dbReference type="ChEBI" id="CHEBI:29108"/>
    </ligand>
</feature>
<feature type="binding site" evidence="1">
    <location>
        <position position="124"/>
    </location>
    <ligand>
        <name>Ca(2+)</name>
        <dbReference type="ChEBI" id="CHEBI:29108"/>
    </ligand>
</feature>
<feature type="binding site" evidence="1">
    <location>
        <position position="227"/>
    </location>
    <ligand>
        <name>substrate</name>
    </ligand>
</feature>
<feature type="binding site" evidence="1">
    <location>
        <position position="239"/>
    </location>
    <ligand>
        <name>substrate</name>
    </ligand>
</feature>
<feature type="binding site" evidence="1">
    <location>
        <position position="240"/>
    </location>
    <ligand>
        <name>Ca(2+)</name>
        <dbReference type="ChEBI" id="CHEBI:29108"/>
    </ligand>
</feature>
<dbReference type="EC" id="3.2.2.8" evidence="1"/>
<dbReference type="EMBL" id="CP000800">
    <property type="protein sequence ID" value="ABV17314.1"/>
    <property type="molecule type" value="Genomic_DNA"/>
</dbReference>
<dbReference type="RefSeq" id="WP_000415429.1">
    <property type="nucleotide sequence ID" value="NC_009801.1"/>
</dbReference>
<dbReference type="SMR" id="A7ZNY5"/>
<dbReference type="KEGG" id="ecw:EcE24377A_2459"/>
<dbReference type="HOGENOM" id="CLU_036838_2_0_6"/>
<dbReference type="Proteomes" id="UP000001122">
    <property type="component" value="Chromosome"/>
</dbReference>
<dbReference type="GO" id="GO:0005829">
    <property type="term" value="C:cytosol"/>
    <property type="evidence" value="ECO:0007669"/>
    <property type="project" value="TreeGrafter"/>
</dbReference>
<dbReference type="GO" id="GO:0005509">
    <property type="term" value="F:calcium ion binding"/>
    <property type="evidence" value="ECO:0007669"/>
    <property type="project" value="UniProtKB-UniRule"/>
</dbReference>
<dbReference type="GO" id="GO:0008477">
    <property type="term" value="F:purine nucleosidase activity"/>
    <property type="evidence" value="ECO:0007669"/>
    <property type="project" value="TreeGrafter"/>
</dbReference>
<dbReference type="GO" id="GO:0045437">
    <property type="term" value="F:uridine nucleosidase activity"/>
    <property type="evidence" value="ECO:0007669"/>
    <property type="project" value="UniProtKB-ARBA"/>
</dbReference>
<dbReference type="GO" id="GO:0006152">
    <property type="term" value="P:purine nucleoside catabolic process"/>
    <property type="evidence" value="ECO:0007669"/>
    <property type="project" value="TreeGrafter"/>
</dbReference>
<dbReference type="GO" id="GO:0006206">
    <property type="term" value="P:pyrimidine nucleobase metabolic process"/>
    <property type="evidence" value="ECO:0007669"/>
    <property type="project" value="UniProtKB-UniRule"/>
</dbReference>
<dbReference type="GO" id="GO:0046133">
    <property type="term" value="P:pyrimidine ribonucleoside catabolic process"/>
    <property type="evidence" value="ECO:0007669"/>
    <property type="project" value="InterPro"/>
</dbReference>
<dbReference type="CDD" id="cd02651">
    <property type="entry name" value="nuc_hydro_IU_UC_XIUA"/>
    <property type="match status" value="1"/>
</dbReference>
<dbReference type="FunFam" id="3.90.245.10:FF:000003">
    <property type="entry name" value="Pyrimidine-specific ribonucleoside hydrolase RihB"/>
    <property type="match status" value="1"/>
</dbReference>
<dbReference type="Gene3D" id="3.90.245.10">
    <property type="entry name" value="Ribonucleoside hydrolase-like"/>
    <property type="match status" value="1"/>
</dbReference>
<dbReference type="HAMAP" id="MF_01433">
    <property type="entry name" value="Pyrim_hydro_RihB"/>
    <property type="match status" value="1"/>
</dbReference>
<dbReference type="InterPro" id="IPR015910">
    <property type="entry name" value="I/U_nuclsd_hydro_CS"/>
</dbReference>
<dbReference type="InterPro" id="IPR001910">
    <property type="entry name" value="Inosine/uridine_hydrolase_dom"/>
</dbReference>
<dbReference type="InterPro" id="IPR023186">
    <property type="entry name" value="IUNH"/>
</dbReference>
<dbReference type="InterPro" id="IPR022977">
    <property type="entry name" value="Pyrim_hydro_RihB"/>
</dbReference>
<dbReference type="InterPro" id="IPR036452">
    <property type="entry name" value="Ribo_hydro-like"/>
</dbReference>
<dbReference type="NCBIfam" id="NF007417">
    <property type="entry name" value="PRK09955.1"/>
    <property type="match status" value="1"/>
</dbReference>
<dbReference type="PANTHER" id="PTHR12304">
    <property type="entry name" value="INOSINE-URIDINE PREFERRING NUCLEOSIDE HYDROLASE"/>
    <property type="match status" value="1"/>
</dbReference>
<dbReference type="PANTHER" id="PTHR12304:SF4">
    <property type="entry name" value="URIDINE NUCLEOSIDASE"/>
    <property type="match status" value="1"/>
</dbReference>
<dbReference type="Pfam" id="PF01156">
    <property type="entry name" value="IU_nuc_hydro"/>
    <property type="match status" value="1"/>
</dbReference>
<dbReference type="SUPFAM" id="SSF53590">
    <property type="entry name" value="Nucleoside hydrolase"/>
    <property type="match status" value="1"/>
</dbReference>
<dbReference type="PROSITE" id="PS01247">
    <property type="entry name" value="IUNH"/>
    <property type="match status" value="1"/>
</dbReference>
<accession>A7ZNY5</accession>
<gene>
    <name evidence="1" type="primary">rihB</name>
    <name type="ordered locus">EcE24377A_2459</name>
</gene>
<name>RIHB_ECO24</name>
<evidence type="ECO:0000255" key="1">
    <source>
        <dbReference type="HAMAP-Rule" id="MF_01433"/>
    </source>
</evidence>